<comment type="function">
    <text>The M protein has a crucial role in virus assembly and interacts with the RNP complex as well as with the viral membrane.</text>
</comment>
<comment type="subcellular location">
    <subcellularLocation>
        <location evidence="2">Virion</location>
    </subcellularLocation>
</comment>
<comment type="domain">
    <text evidence="1">Late-budding domains (L domains) are short sequence motifs essential for viral particle budding. They recruit proteins of the host ESCRT machinery (Endosomal Sorting Complex Required for Transport) or ESCRT-associated proteins. The matrix protein contains one L domain: a FPIV motif (By similarity).</text>
</comment>
<comment type="similarity">
    <text evidence="2">Belongs to the morbillivirus/respirovirus/rubulavirus M protein family.</text>
</comment>
<proteinExistence type="inferred from homology"/>
<keyword id="KW-0945">Host-virus interaction</keyword>
<keyword id="KW-1198">Viral budding</keyword>
<keyword id="KW-1187">Viral budding via the host ESCRT complexes</keyword>
<keyword id="KW-0261">Viral envelope protein</keyword>
<keyword id="KW-0468">Viral matrix protein</keyword>
<keyword id="KW-1188">Viral release from host cell</keyword>
<keyword id="KW-0946">Virion</keyword>
<organism>
    <name type="scientific">Newcastle disease virus (strain Beaudette C/45)</name>
    <name type="common">NDV</name>
    <dbReference type="NCBI Taxonomy" id="11178"/>
    <lineage>
        <taxon>Viruses</taxon>
        <taxon>Riboviria</taxon>
        <taxon>Orthornavirae</taxon>
        <taxon>Negarnaviricota</taxon>
        <taxon>Haploviricotina</taxon>
        <taxon>Monjiviricetes</taxon>
        <taxon>Mononegavirales</taxon>
        <taxon>Paramyxoviridae</taxon>
        <taxon>Avulavirinae</taxon>
        <taxon>Orthoavulavirus</taxon>
        <taxon>Orthoavulavirus javaense</taxon>
        <taxon>Avian paramyxovirus 1</taxon>
    </lineage>
</organism>
<organismHost>
    <name type="scientific">Gallus gallus</name>
    <name type="common">Chicken</name>
    <dbReference type="NCBI Taxonomy" id="9031"/>
</organismHost>
<reference key="1">
    <citation type="journal article" date="1986" name="Nucleic Acids Res.">
        <title>Nucleotide sequence of the gene encoding the matrix protein of Newcastle disease virus.</title>
        <authorList>
            <person name="Chambers P."/>
            <person name="Millar N.S."/>
            <person name="Platt S.G."/>
            <person name="Emmerson P.T."/>
        </authorList>
    </citation>
    <scope>NUCLEOTIDE SEQUENCE [GENOMIC RNA]</scope>
</reference>
<sequence>MDSSRTIGLYFDSAHSSSNLLAFPIVLQDTGDGKKQIAPQYRIQRLDSWTDSKEDSVFITTYGFIFQVGNEEATVGMINDNPKRELLSAAMLCLGSVPNTGDLVELARACLTMVVTCKKSATNTERMVFSVVQAPQVLQSCRVVANKYSSVNAVKHVKAPEKIPGSGTLEYKVNFVSLTVVPKKDVYKIPTAVLKVSGSSLYNLALNVTINVEVDSRSPLVKSLSKSDSGYYANLFLHIGLMTTVDRRGKKVTFDKLEKKIRSLDLSVGLSDVLGPSVLVKARGARTKLLAPFFSSSGTACYPIANASPQVAKILWSQTACLRSVKIIIQAGTQRTVAVTADHEVTSTKLEKGHTLAKYNPFKK</sequence>
<gene>
    <name type="primary">M</name>
</gene>
<name>MATRX_NDVB</name>
<dbReference type="EMBL" id="X04687">
    <property type="protein sequence ID" value="CAA28389.1"/>
    <property type="molecule type" value="Genomic_RNA"/>
</dbReference>
<dbReference type="PIR" id="A26111">
    <property type="entry name" value="MFNZNC"/>
</dbReference>
<dbReference type="SMR" id="P06157"/>
<dbReference type="GO" id="GO:0019031">
    <property type="term" value="C:viral envelope"/>
    <property type="evidence" value="ECO:0007669"/>
    <property type="project" value="UniProtKB-KW"/>
</dbReference>
<dbReference type="GO" id="GO:0039660">
    <property type="term" value="F:structural constituent of virion"/>
    <property type="evidence" value="ECO:0007669"/>
    <property type="project" value="UniProtKB-KW"/>
</dbReference>
<dbReference type="GO" id="GO:0039702">
    <property type="term" value="P:viral budding via host ESCRT complex"/>
    <property type="evidence" value="ECO:0007669"/>
    <property type="project" value="UniProtKB-KW"/>
</dbReference>
<dbReference type="FunFam" id="2.70.20.50:FF:000002">
    <property type="entry name" value="Matrix protein"/>
    <property type="match status" value="1"/>
</dbReference>
<dbReference type="FunFam" id="2.70.20.60:FF:000002">
    <property type="entry name" value="Matrix protein"/>
    <property type="match status" value="1"/>
</dbReference>
<dbReference type="Gene3D" id="2.70.20.60">
    <property type="entry name" value="Viral matrix protein, C-terminal domain"/>
    <property type="match status" value="1"/>
</dbReference>
<dbReference type="Gene3D" id="2.70.20.50">
    <property type="entry name" value="Viral matrix protein, N-terminal domain"/>
    <property type="match status" value="1"/>
</dbReference>
<dbReference type="InterPro" id="IPR042539">
    <property type="entry name" value="Matrix_C"/>
</dbReference>
<dbReference type="InterPro" id="IPR042540">
    <property type="entry name" value="Matrix_N"/>
</dbReference>
<dbReference type="InterPro" id="IPR055413">
    <property type="entry name" value="Matrix_Paramyxo_C"/>
</dbReference>
<dbReference type="InterPro" id="IPR000982">
    <property type="entry name" value="Matrix_Paramyxo_N"/>
</dbReference>
<dbReference type="Pfam" id="PF23765">
    <property type="entry name" value="Matrix_Paramyxo_C"/>
    <property type="match status" value="1"/>
</dbReference>
<dbReference type="Pfam" id="PF00661">
    <property type="entry name" value="Matrix_Paramyxo_N"/>
    <property type="match status" value="1"/>
</dbReference>
<accession>P06157</accession>
<feature type="chain" id="PRO_0000142760" description="Matrix protein">
    <location>
        <begin position="1"/>
        <end position="364"/>
    </location>
</feature>
<feature type="short sequence motif" description="FPIV motif" evidence="1">
    <location>
        <begin position="23"/>
        <end position="26"/>
    </location>
</feature>
<evidence type="ECO:0000250" key="1"/>
<evidence type="ECO:0000305" key="2"/>
<protein>
    <recommendedName>
        <fullName>Matrix protein</fullName>
    </recommendedName>
</protein>